<gene>
    <name evidence="8" type="primary">MAD1</name>
    <name type="ORF">AOL_s00076g567</name>
</gene>
<name>MAD1_ARTOA</name>
<sequence>MKGAIQFLGALAAVQAVSATYIDWTQPFNSYDCGGKQCGGRPKFEPPAYSNERCTPQQNTGYDFSDAPDGDLPKYDDFDFSGYKCQKSKLQRRSGRGSGSKCASSYVEPETYSNEIKCGKKFSVDEFDISLEYESVIEFHYGMPDGSSCKHVSKCGTGITPVKNTQCGGAKSVKCKIHKSSQNKKKCKFNIHHIKFRCDKPSTTSAPVPATTSEPAPCTEYSCTATDTTTEPAPTEPAPTEPAPCTEYSCTATDTTTEPAPTEPAPCTEYSCTATDTTTEPAPCTEYSCTATDTTTEPAPTEPAPTEPAPCTEYSCTATDTTTEPAPTEPAPTEPAPCTEYSCTATDTTTEPAPTEPAPCTEYSCTATETTSEAVPTTTDEAPCTDYSCTATEAVPTTTDEAPCTEYSCTGVPTSEAVPTTSDDVPTTTDVYIPPTDVYVPPTDIYVPPANTSIPYETPSPSETETLPPSGTDVYTTLPSVPVETGCPPVLPQCMETWTKITQCVNSGDVKCLCPNPEYIKSVAECVEAWGVDDDEVAKALEYMQGLCAEHIPENPAIVTCVPTYVTLPPVTTGASTVTVSTTVVVPVTTASPEETNKPGYVPVFTTETVIRTVTVCPVKLVTTEPSKPVLVPGTITAPPYVPPTAPATIPATVPAEATTPPVEYAPSTLMTAYPTVPVPVNNTTPNPPIATGAASSFKAFSTVMLAGVIGLTALIMA</sequence>
<organism>
    <name type="scientific">Arthrobotrys oligospora (strain ATCC 24927 / CBS 115.81 / DSM 1491)</name>
    <name type="common">Nematode-trapping fungus</name>
    <name type="synonym">Didymozoophaga oligospora</name>
    <dbReference type="NCBI Taxonomy" id="756982"/>
    <lineage>
        <taxon>Eukaryota</taxon>
        <taxon>Fungi</taxon>
        <taxon>Dikarya</taxon>
        <taxon>Ascomycota</taxon>
        <taxon>Pezizomycotina</taxon>
        <taxon>Orbiliomycetes</taxon>
        <taxon>Orbiliales</taxon>
        <taxon>Orbiliaceae</taxon>
        <taxon>Orbilia</taxon>
        <taxon>Orbilia oligospora</taxon>
    </lineage>
</organism>
<accession>G1XAA9</accession>
<evidence type="ECO:0000250" key="1">
    <source>
        <dbReference type="UniProtKB" id="Q2LC49"/>
    </source>
</evidence>
<evidence type="ECO:0000250" key="2">
    <source>
        <dbReference type="UniProtKB" id="Q59UT4"/>
    </source>
</evidence>
<evidence type="ECO:0000250" key="3">
    <source>
        <dbReference type="UniProtKB" id="Q59UT5"/>
    </source>
</evidence>
<evidence type="ECO:0000255" key="4"/>
<evidence type="ECO:0000255" key="5">
    <source>
        <dbReference type="PROSITE-ProRule" id="PRU01356"/>
    </source>
</evidence>
<evidence type="ECO:0000256" key="6">
    <source>
        <dbReference type="SAM" id="MobiDB-lite"/>
    </source>
</evidence>
<evidence type="ECO:0000269" key="7">
    <source>
    </source>
</evidence>
<evidence type="ECO:0000303" key="8">
    <source>
    </source>
</evidence>
<evidence type="ECO:0000305" key="9"/>
<evidence type="ECO:0000305" key="10">
    <source>
    </source>
</evidence>
<keyword id="KW-1003">Cell membrane</keyword>
<keyword id="KW-0134">Cell wall</keyword>
<keyword id="KW-1015">Disulfide bond</keyword>
<keyword id="KW-0325">Glycoprotein</keyword>
<keyword id="KW-0336">GPI-anchor</keyword>
<keyword id="KW-0349">Heme</keyword>
<keyword id="KW-0408">Iron</keyword>
<keyword id="KW-0449">Lipoprotein</keyword>
<keyword id="KW-0472">Membrane</keyword>
<keyword id="KW-0479">Metal-binding</keyword>
<keyword id="KW-1185">Reference proteome</keyword>
<keyword id="KW-0677">Repeat</keyword>
<keyword id="KW-0964">Secreted</keyword>
<keyword id="KW-0732">Signal</keyword>
<reference key="1">
    <citation type="journal article" date="2011" name="PLoS Pathog.">
        <title>Genomic and proteomic analyses of the fungus Arthrobotrys oligospora provide insights into nematode-trap formation.</title>
        <authorList>
            <person name="Yang J."/>
            <person name="Wang L."/>
            <person name="Ji X."/>
            <person name="Feng Y."/>
            <person name="Li X."/>
            <person name="Zou C."/>
            <person name="Xu J."/>
            <person name="Ren Y."/>
            <person name="Mi Q."/>
            <person name="Wu J."/>
            <person name="Liu S."/>
            <person name="Liu Y."/>
            <person name="Huang X."/>
            <person name="Wang H."/>
            <person name="Niu X."/>
            <person name="Li J."/>
            <person name="Liang L."/>
            <person name="Luo Y."/>
            <person name="Ji K."/>
            <person name="Zhou W."/>
            <person name="Yu Z."/>
            <person name="Li G."/>
            <person name="Liu Y."/>
            <person name="Li L."/>
            <person name="Qiao M."/>
            <person name="Feng L."/>
            <person name="Zhang K.-Q."/>
        </authorList>
    </citation>
    <scope>NUCLEOTIDE SEQUENCE [LARGE SCALE GENOMIC DNA]</scope>
    <source>
        <strain>ATCC 24927 / CBS 115.81 / DSM 1491</strain>
    </source>
</reference>
<reference key="2">
    <citation type="journal article" date="2015" name="Fungal Genet. Biol.">
        <title>A proposed adhesin AoMad1 helps nematode-trapping fungus Arthrobotrys oligospora recognizing host signals for life-style switching.</title>
        <authorList>
            <person name="Liang L."/>
            <person name="Shen R."/>
            <person name="Mo Y."/>
            <person name="Yang J."/>
            <person name="Ji X."/>
            <person name="Zhang K.Q."/>
        </authorList>
    </citation>
    <scope>FUNCTION</scope>
    <scope>DOMAIN</scope>
    <scope>DISRUPTION PHENOTYPE</scope>
    <scope>SUBCELLULAR LOCATION</scope>
</reference>
<comment type="function">
    <text evidence="7">Cell surface adhesion protein that plays a key role in switching between the saprophytic lifestyle and the predacious lifestyle (nematode trapping) (PubMed:25724687). Likely functions to prevent energy-consuming trap formation in the absence of nematodes, and keeps the fungus in the saprophytic life style (PubMed:25724687). May influence the induction signal of trap formation by limiting the porosity of the cell wall and thus affecting its permeability of nitrogen source (PubMed:25724687).</text>
</comment>
<comment type="subcellular location">
    <subcellularLocation>
        <location evidence="7">Secreted</location>
        <location evidence="7">Cell wall</location>
    </subcellularLocation>
    <subcellularLocation>
        <location evidence="10">Cell membrane</location>
        <topology evidence="10">Lipid-anchor</topology>
        <topology evidence="10">GPI-anchor</topology>
    </subcellularLocation>
    <text evidence="2">Found anchored in the cell membrane as well as a covalently-linked GPI-modified cell wall protein (GPI-CWP).</text>
</comment>
<comment type="domain">
    <text evidence="3">The CFEM domain is involved in heme-binding. It contains 8 cysteines and is found in proteins from several pathogenic fungi, including both human and plant pathogens.</text>
</comment>
<comment type="domain">
    <text evidence="1">The tandem repeats might be heavily glycosylated to produce a rigid elongated structure that holds the adhesive N-terminal domain at the cell surface.</text>
</comment>
<comment type="PTM">
    <text evidence="3">The GPI-anchor is attached to the protein in the endoplasmic reticulum and serves to target the protein to the cell surface. There, the glucosamine-inositol phospholipid moiety is cleaved off and the GPI-modified mannoprotein is covalently attached via its lipidless GPI glycan remnant to the 1,6-beta-glucan of the outer cell wall layer.</text>
</comment>
<comment type="disruption phenotype">
    <text evidence="7">Reults in the formation of more traps in the presence of nematodes and an increased sensitivity to certain nitrogen sources as trap inducers (PubMed:25724687). Lacks cell surface adhesive materials and leads to more porous cell wall structures (PubMed:25724687). Affects the expression of many nitrogen metabolism, host-pathogen interaction and mycelia development related genes during sodium nitrate-induced trap formation (PubMed:25724687).</text>
</comment>
<comment type="similarity">
    <text evidence="9">Belongs to the RBT5 family.</text>
</comment>
<proteinExistence type="inferred from homology"/>
<protein>
    <recommendedName>
        <fullName evidence="8">Adhesin-like cell surface protein MAD1</fullName>
    </recommendedName>
    <alternativeName>
        <fullName evidence="8">CFEM domain-containing cell surface protein MAD1</fullName>
    </alternativeName>
</protein>
<dbReference type="EMBL" id="ADOT01000129">
    <property type="protein sequence ID" value="EGX49926.1"/>
    <property type="molecule type" value="Genomic_DNA"/>
</dbReference>
<dbReference type="RefSeq" id="XP_011121421.1">
    <property type="nucleotide sequence ID" value="XM_011123119.1"/>
</dbReference>
<dbReference type="SMR" id="G1XAA9"/>
<dbReference type="STRING" id="756982.G1XAA9"/>
<dbReference type="GeneID" id="22892359"/>
<dbReference type="eggNOG" id="ENOG502RZBR">
    <property type="taxonomic scope" value="Eukaryota"/>
</dbReference>
<dbReference type="HOGENOM" id="CLU_013457_0_0_1"/>
<dbReference type="InParanoid" id="G1XAA9"/>
<dbReference type="OMA" id="TEYSCTA"/>
<dbReference type="OrthoDB" id="2005181at4890"/>
<dbReference type="Proteomes" id="UP000008784">
    <property type="component" value="Unassembled WGS sequence"/>
</dbReference>
<dbReference type="GO" id="GO:0005576">
    <property type="term" value="C:extracellular region"/>
    <property type="evidence" value="ECO:0007669"/>
    <property type="project" value="UniProtKB-KW"/>
</dbReference>
<dbReference type="GO" id="GO:0005886">
    <property type="term" value="C:plasma membrane"/>
    <property type="evidence" value="ECO:0007669"/>
    <property type="project" value="UniProtKB-SubCell"/>
</dbReference>
<dbReference type="GO" id="GO:0098552">
    <property type="term" value="C:side of membrane"/>
    <property type="evidence" value="ECO:0007669"/>
    <property type="project" value="UniProtKB-KW"/>
</dbReference>
<dbReference type="GO" id="GO:0046872">
    <property type="term" value="F:metal ion binding"/>
    <property type="evidence" value="ECO:0007669"/>
    <property type="project" value="UniProtKB-KW"/>
</dbReference>
<dbReference type="InterPro" id="IPR008427">
    <property type="entry name" value="Extracellular_membr_CFEM_dom"/>
</dbReference>
<dbReference type="Pfam" id="PF05730">
    <property type="entry name" value="CFEM"/>
    <property type="match status" value="1"/>
</dbReference>
<feature type="signal peptide" evidence="4">
    <location>
        <begin position="1"/>
        <end position="19"/>
    </location>
</feature>
<feature type="chain" id="PRO_5003426007" description="Adhesin-like cell surface protein MAD1" evidence="4">
    <location>
        <begin position="20"/>
        <end position="693"/>
    </location>
</feature>
<feature type="propeptide" id="PRO_0000457851" description="Removed in mature form" evidence="4">
    <location>
        <begin position="694"/>
        <end position="718"/>
    </location>
</feature>
<feature type="repeat" description="1" evidence="10">
    <location>
        <begin position="217"/>
        <end position="243"/>
    </location>
</feature>
<feature type="repeat" description="2" evidence="10">
    <location>
        <begin position="244"/>
        <end position="265"/>
    </location>
</feature>
<feature type="repeat" description="3" evidence="10">
    <location>
        <begin position="266"/>
        <end position="282"/>
    </location>
</feature>
<feature type="repeat" description="4" evidence="10">
    <location>
        <begin position="283"/>
        <end position="309"/>
    </location>
</feature>
<feature type="repeat" description="5" evidence="10">
    <location>
        <begin position="310"/>
        <end position="336"/>
    </location>
</feature>
<feature type="repeat" description="6" evidence="10">
    <location>
        <begin position="337"/>
        <end position="358"/>
    </location>
</feature>
<feature type="repeat" description="7" evidence="10">
    <location>
        <begin position="359"/>
        <end position="382"/>
    </location>
</feature>
<feature type="repeat" description="8" evidence="10">
    <location>
        <begin position="383"/>
        <end position="402"/>
    </location>
</feature>
<feature type="repeat" description="9" evidence="10">
    <location>
        <begin position="403"/>
        <end position="420"/>
    </location>
</feature>
<feature type="domain" description="CFEM" evidence="5">
    <location>
        <begin position="462"/>
        <end position="575"/>
    </location>
</feature>
<feature type="region of interest" description="Disordered" evidence="6">
    <location>
        <begin position="452"/>
        <end position="472"/>
    </location>
</feature>
<feature type="binding site" description="axial binding residue" evidence="5">
    <location>
        <position position="509"/>
    </location>
    <ligand>
        <name>heme</name>
        <dbReference type="ChEBI" id="CHEBI:30413"/>
    </ligand>
    <ligandPart>
        <name>Fe</name>
        <dbReference type="ChEBI" id="CHEBI:18248"/>
    </ligandPart>
</feature>
<feature type="lipid moiety-binding region" description="GPI-anchor amidated glycine" evidence="4">
    <location>
        <position position="693"/>
    </location>
</feature>
<feature type="disulfide bond" evidence="5">
    <location>
        <begin position="494"/>
        <end position="526"/>
    </location>
</feature>
<feature type="disulfide bond" evidence="5">
    <location>
        <begin position="504"/>
        <end position="512"/>
    </location>
</feature>
<feature type="disulfide bond" evidence="5">
    <location>
        <begin position="514"/>
        <end position="548"/>
    </location>
</feature>